<gene>
    <name type="primary">rplT</name>
    <name type="ordered locus">HP_0126</name>
</gene>
<keyword id="KW-1185">Reference proteome</keyword>
<keyword id="KW-0687">Ribonucleoprotein</keyword>
<keyword id="KW-0689">Ribosomal protein</keyword>
<keyword id="KW-0694">RNA-binding</keyword>
<keyword id="KW-0699">rRNA-binding</keyword>
<organism>
    <name type="scientific">Helicobacter pylori (strain ATCC 700392 / 26695)</name>
    <name type="common">Campylobacter pylori</name>
    <dbReference type="NCBI Taxonomy" id="85962"/>
    <lineage>
        <taxon>Bacteria</taxon>
        <taxon>Pseudomonadati</taxon>
        <taxon>Campylobacterota</taxon>
        <taxon>Epsilonproteobacteria</taxon>
        <taxon>Campylobacterales</taxon>
        <taxon>Helicobacteraceae</taxon>
        <taxon>Helicobacter</taxon>
    </lineage>
</organism>
<proteinExistence type="inferred from homology"/>
<comment type="function">
    <text evidence="1">Binds directly to 23S ribosomal RNA and is necessary for the in vitro assembly process of the 50S ribosomal subunit. It is not involved in the protein synthesizing functions of that subunit (By similarity).</text>
</comment>
<comment type="similarity">
    <text evidence="2">Belongs to the bacterial ribosomal protein bL20 family.</text>
</comment>
<dbReference type="EMBL" id="AE000511">
    <property type="protein sequence ID" value="AAD07194.1"/>
    <property type="molecule type" value="Genomic_DNA"/>
</dbReference>
<dbReference type="PIR" id="F64535">
    <property type="entry name" value="F64535"/>
</dbReference>
<dbReference type="RefSeq" id="NP_206926.1">
    <property type="nucleotide sequence ID" value="NC_000915.1"/>
</dbReference>
<dbReference type="RefSeq" id="WP_001264177.1">
    <property type="nucleotide sequence ID" value="NC_018939.1"/>
</dbReference>
<dbReference type="SMR" id="P56045"/>
<dbReference type="FunCoup" id="P56045">
    <property type="interactions" value="411"/>
</dbReference>
<dbReference type="STRING" id="85962.HP_0126"/>
<dbReference type="PaxDb" id="85962-C694_00625"/>
<dbReference type="EnsemblBacteria" id="AAD07194">
    <property type="protein sequence ID" value="AAD07194"/>
    <property type="gene ID" value="HP_0126"/>
</dbReference>
<dbReference type="KEGG" id="heo:C694_00625"/>
<dbReference type="KEGG" id="hpy:HP_0126"/>
<dbReference type="PATRIC" id="fig|85962.47.peg.136"/>
<dbReference type="eggNOG" id="COG0292">
    <property type="taxonomic scope" value="Bacteria"/>
</dbReference>
<dbReference type="InParanoid" id="P56045"/>
<dbReference type="OrthoDB" id="9808966at2"/>
<dbReference type="PhylomeDB" id="P56045"/>
<dbReference type="Proteomes" id="UP000000429">
    <property type="component" value="Chromosome"/>
</dbReference>
<dbReference type="GO" id="GO:0022625">
    <property type="term" value="C:cytosolic large ribosomal subunit"/>
    <property type="evidence" value="ECO:0000318"/>
    <property type="project" value="GO_Central"/>
</dbReference>
<dbReference type="GO" id="GO:0019843">
    <property type="term" value="F:rRNA binding"/>
    <property type="evidence" value="ECO:0007669"/>
    <property type="project" value="UniProtKB-UniRule"/>
</dbReference>
<dbReference type="GO" id="GO:0003735">
    <property type="term" value="F:structural constituent of ribosome"/>
    <property type="evidence" value="ECO:0000318"/>
    <property type="project" value="GO_Central"/>
</dbReference>
<dbReference type="GO" id="GO:0000027">
    <property type="term" value="P:ribosomal large subunit assembly"/>
    <property type="evidence" value="ECO:0007669"/>
    <property type="project" value="UniProtKB-UniRule"/>
</dbReference>
<dbReference type="GO" id="GO:0006412">
    <property type="term" value="P:translation"/>
    <property type="evidence" value="ECO:0007669"/>
    <property type="project" value="InterPro"/>
</dbReference>
<dbReference type="CDD" id="cd07026">
    <property type="entry name" value="Ribosomal_L20"/>
    <property type="match status" value="1"/>
</dbReference>
<dbReference type="FunFam" id="1.10.1900.20:FF:000001">
    <property type="entry name" value="50S ribosomal protein L20"/>
    <property type="match status" value="1"/>
</dbReference>
<dbReference type="Gene3D" id="6.10.160.10">
    <property type="match status" value="1"/>
</dbReference>
<dbReference type="Gene3D" id="1.10.1900.20">
    <property type="entry name" value="Ribosomal protein L20"/>
    <property type="match status" value="1"/>
</dbReference>
<dbReference type="HAMAP" id="MF_00382">
    <property type="entry name" value="Ribosomal_bL20"/>
    <property type="match status" value="1"/>
</dbReference>
<dbReference type="InterPro" id="IPR005813">
    <property type="entry name" value="Ribosomal_bL20"/>
</dbReference>
<dbReference type="InterPro" id="IPR049946">
    <property type="entry name" value="RIBOSOMAL_L20_CS"/>
</dbReference>
<dbReference type="InterPro" id="IPR035566">
    <property type="entry name" value="Ribosomal_protein_bL20_C"/>
</dbReference>
<dbReference type="NCBIfam" id="TIGR01032">
    <property type="entry name" value="rplT_bact"/>
    <property type="match status" value="1"/>
</dbReference>
<dbReference type="PANTHER" id="PTHR10986">
    <property type="entry name" value="39S RIBOSOMAL PROTEIN L20"/>
    <property type="match status" value="1"/>
</dbReference>
<dbReference type="Pfam" id="PF00453">
    <property type="entry name" value="Ribosomal_L20"/>
    <property type="match status" value="1"/>
</dbReference>
<dbReference type="PRINTS" id="PR00062">
    <property type="entry name" value="RIBOSOMALL20"/>
</dbReference>
<dbReference type="SUPFAM" id="SSF74731">
    <property type="entry name" value="Ribosomal protein L20"/>
    <property type="match status" value="1"/>
</dbReference>
<dbReference type="PROSITE" id="PS00937">
    <property type="entry name" value="RIBOSOMAL_L20"/>
    <property type="match status" value="1"/>
</dbReference>
<feature type="chain" id="PRO_0000177167" description="Large ribosomal subunit protein bL20">
    <location>
        <begin position="1"/>
        <end position="116"/>
    </location>
</feature>
<evidence type="ECO:0000250" key="1"/>
<evidence type="ECO:0000305" key="2"/>
<accession>P56045</accession>
<reference key="1">
    <citation type="journal article" date="1997" name="Nature">
        <title>The complete genome sequence of the gastric pathogen Helicobacter pylori.</title>
        <authorList>
            <person name="Tomb J.-F."/>
            <person name="White O."/>
            <person name="Kerlavage A.R."/>
            <person name="Clayton R.A."/>
            <person name="Sutton G.G."/>
            <person name="Fleischmann R.D."/>
            <person name="Ketchum K.A."/>
            <person name="Klenk H.-P."/>
            <person name="Gill S.R."/>
            <person name="Dougherty B.A."/>
            <person name="Nelson K.E."/>
            <person name="Quackenbush J."/>
            <person name="Zhou L."/>
            <person name="Kirkness E.F."/>
            <person name="Peterson S.N."/>
            <person name="Loftus B.J."/>
            <person name="Richardson D.L."/>
            <person name="Dodson R.J."/>
            <person name="Khalak H.G."/>
            <person name="Glodek A."/>
            <person name="McKenney K."/>
            <person name="FitzGerald L.M."/>
            <person name="Lee N."/>
            <person name="Adams M.D."/>
            <person name="Hickey E.K."/>
            <person name="Berg D.E."/>
            <person name="Gocayne J.D."/>
            <person name="Utterback T.R."/>
            <person name="Peterson J.D."/>
            <person name="Kelley J.M."/>
            <person name="Cotton M.D."/>
            <person name="Weidman J.F."/>
            <person name="Fujii C."/>
            <person name="Bowman C."/>
            <person name="Watthey L."/>
            <person name="Wallin E."/>
            <person name="Hayes W.S."/>
            <person name="Borodovsky M."/>
            <person name="Karp P.D."/>
            <person name="Smith H.O."/>
            <person name="Fraser C.M."/>
            <person name="Venter J.C."/>
        </authorList>
    </citation>
    <scope>NUCLEOTIDE SEQUENCE [LARGE SCALE GENOMIC DNA]</scope>
    <source>
        <strain>ATCC 700392 / 26695</strain>
    </source>
</reference>
<name>RL20_HELPY</name>
<protein>
    <recommendedName>
        <fullName evidence="2">Large ribosomal subunit protein bL20</fullName>
    </recommendedName>
    <alternativeName>
        <fullName>50S ribosomal protein L20</fullName>
    </alternativeName>
</protein>
<sequence>MRVKTGVVRRRRHKKVLKLARGFYSGRRKHFRKAKEQLERSMYYAFRDRKQKKREFRSLWVVRINAACRMHNTSYSRFMHALKVANIELDRKVLADMAMNDMQAFTSVLESVKEHL</sequence>